<feature type="signal peptide" evidence="1">
    <location>
        <begin position="1"/>
        <end position="19"/>
    </location>
</feature>
<feature type="propeptide" id="PRO_0000454325" description="Removed in mature form, probably by the serine protease triapsin" evidence="5">
    <location>
        <begin position="20"/>
        <end position="55"/>
    </location>
</feature>
<feature type="chain" id="PRO_5004313654" description="Trialysin" evidence="5">
    <location>
        <begin position="56"/>
        <end position="260"/>
    </location>
</feature>
<feature type="sequence variant" evidence="5">
    <original>F</original>
    <variation>L</variation>
    <location>
        <position position="67"/>
    </location>
</feature>
<feature type="sequence variant" evidence="5">
    <original>A</original>
    <variation>L</variation>
    <location>
        <position position="83"/>
    </location>
</feature>
<feature type="sequence variant" evidence="5">
    <original>G</original>
    <variation>L</variation>
    <location>
        <position position="100"/>
    </location>
</feature>
<feature type="sequence variant" evidence="5">
    <original>M</original>
    <variation>T</variation>
    <location>
        <position position="178"/>
    </location>
</feature>
<feature type="sequence variant" evidence="5">
    <original>I</original>
    <variation>V</variation>
    <location>
        <position position="224"/>
    </location>
</feature>
<feature type="sequence variant" evidence="5">
    <original>D</original>
    <variation>E</variation>
    <location>
        <position position="238"/>
    </location>
</feature>
<feature type="sequence conflict" description="In Ref. 1; AAL82381." evidence="4" ref="1">
    <original>G</original>
    <variation>S</variation>
    <location>
        <position position="72"/>
    </location>
</feature>
<feature type="sequence conflict" description="In Ref. 1; AAL82381." evidence="4" ref="1">
    <original>K</original>
    <variation>N</variation>
    <location>
        <position position="111"/>
    </location>
</feature>
<evidence type="ECO:0000255" key="1"/>
<evidence type="ECO:0000269" key="2">
    <source>
    </source>
</evidence>
<evidence type="ECO:0000303" key="3">
    <source>
    </source>
</evidence>
<evidence type="ECO:0000305" key="4"/>
<evidence type="ECO:0000305" key="5">
    <source>
    </source>
</evidence>
<evidence type="ECO:0000312" key="6">
    <source>
        <dbReference type="EMBL" id="AAL82381.1"/>
    </source>
</evidence>
<protein>
    <recommendedName>
        <fullName evidence="3">Trialysin</fullName>
    </recommendedName>
    <alternativeName>
        <fullName evidence="3">Triatoma infestans cytolysin</fullName>
    </alternativeName>
</protein>
<proteinExistence type="evidence at protein level"/>
<comment type="function">
    <text evidence="2">Pore-forming protein that induces lysis of T.cruzi trypomastigotes, bacteria E.coli and human red blood cells (PubMed:11751887). The parasite lysis is much more important than the hemolysis, probably due to difference in membrane composition (PubMed:11751887). Its action on protozoan parasites and bacteria may indicate a role in the control of microorganism growth in the salivary glands (PubMed:11751887).</text>
</comment>
<comment type="subcellular location">
    <subcellularLocation>
        <location evidence="2">Secreted</location>
    </subcellularLocation>
    <subcellularLocation>
        <location evidence="5">Target cell membrane</location>
    </subcellularLocation>
</comment>
<comment type="tissue specificity">
    <text evidence="2">Expressed in salivary glands.</text>
</comment>
<comment type="miscellaneous">
    <text evidence="5">Has an amphipathic alpha-helical structure with positive charges on one side and hydrophobic amino acids on the opposite side.</text>
</comment>
<comment type="similarity">
    <text evidence="4">Belongs to the redulysin-like family.</text>
</comment>
<dbReference type="EMBL" id="AF427486">
    <property type="protein sequence ID" value="AAL82380.1"/>
    <property type="molecule type" value="mRNA"/>
</dbReference>
<dbReference type="EMBL" id="AF427487">
    <property type="protein sequence ID" value="AAL82381.1"/>
    <property type="molecule type" value="mRNA"/>
</dbReference>
<dbReference type="TCDB" id="1.C.86.1.1">
    <property type="family name" value="the pore-forming trialysin (trialysin) family"/>
</dbReference>
<dbReference type="GO" id="GO:0005576">
    <property type="term" value="C:extracellular region"/>
    <property type="evidence" value="ECO:0007669"/>
    <property type="project" value="UniProtKB-SubCell"/>
</dbReference>
<dbReference type="GO" id="GO:0016020">
    <property type="term" value="C:membrane"/>
    <property type="evidence" value="ECO:0007669"/>
    <property type="project" value="UniProtKB-KW"/>
</dbReference>
<dbReference type="GO" id="GO:0044218">
    <property type="term" value="C:other organism cell membrane"/>
    <property type="evidence" value="ECO:0007669"/>
    <property type="project" value="UniProtKB-KW"/>
</dbReference>
<dbReference type="GO" id="GO:0051715">
    <property type="term" value="P:cytolysis in another organism"/>
    <property type="evidence" value="ECO:0000314"/>
    <property type="project" value="UniProtKB"/>
</dbReference>
<dbReference type="GO" id="GO:0042742">
    <property type="term" value="P:defense response to bacterium"/>
    <property type="evidence" value="ECO:0000314"/>
    <property type="project" value="UniProtKB"/>
</dbReference>
<dbReference type="GO" id="GO:0044179">
    <property type="term" value="P:hemolysis in another organism"/>
    <property type="evidence" value="ECO:0000314"/>
    <property type="project" value="UniProtKB"/>
</dbReference>
<dbReference type="GO" id="GO:0006811">
    <property type="term" value="P:monoatomic ion transport"/>
    <property type="evidence" value="ECO:0007669"/>
    <property type="project" value="UniProtKB-KW"/>
</dbReference>
<dbReference type="GO" id="GO:0035915">
    <property type="term" value="P:pore formation in membrane of another organism"/>
    <property type="evidence" value="ECO:0000314"/>
    <property type="project" value="UniProtKB"/>
</dbReference>
<name>REDT_TRIIF</name>
<reference evidence="6" key="1">
    <citation type="journal article" date="2002" name="J. Biol. Chem.">
        <title>Trialysin, a novel pore-forming protein from saliva of hematophagous insects activated by limited proteolysis.</title>
        <authorList>
            <person name="Amino R."/>
            <person name="Martins R.M."/>
            <person name="Procopio J."/>
            <person name="Hirata I.Y."/>
            <person name="Juliano M.A."/>
            <person name="Schenkman S."/>
        </authorList>
    </citation>
    <scope>NUCLEOTIDE SEQUENCE [MRNA]</scope>
    <scope>PROTEIN SEQUENCE OF 56-75</scope>
    <scope>FUNCTION</scope>
    <scope>SYNTHESIS OF 61-87</scope>
    <scope>SUBCELLULAR LOCATION</scope>
    <scope>TISSUE SPECIFICITY</scope>
    <source>
        <tissue>Saliva</tissue>
        <tissue>Salivary gland</tissue>
    </source>
</reference>
<organism>
    <name type="scientific">Triatoma infestans</name>
    <name type="common">Assassin bug</name>
    <dbReference type="NCBI Taxonomy" id="30076"/>
    <lineage>
        <taxon>Eukaryota</taxon>
        <taxon>Metazoa</taxon>
        <taxon>Ecdysozoa</taxon>
        <taxon>Arthropoda</taxon>
        <taxon>Hexapoda</taxon>
        <taxon>Insecta</taxon>
        <taxon>Pterygota</taxon>
        <taxon>Neoptera</taxon>
        <taxon>Paraneoptera</taxon>
        <taxon>Hemiptera</taxon>
        <taxon>Heteroptera</taxon>
        <taxon>Panheteroptera</taxon>
        <taxon>Cimicomorpha</taxon>
        <taxon>Reduviidae</taxon>
        <taxon>Triatominae</taxon>
        <taxon>Triatoma</taxon>
    </lineage>
</organism>
<sequence>MSKFWLLLLLVAAFQFAHSYPAAEYELDETTNDEVRQFIGDGYFEDEGDDGDEERFKIKPGKVLDKFGKIVGKVLKQLKKVSAVAKVAMKKGAALLKKMGVKISPLKCEEKTCKSCVIFKIPTENSFCLTIRFMKTNIATYLVVAGEINRKSKFEEKLKLGNMPRCVNVEGFIGKVCMKGIEGHAKSSSGQANVNFCLGLVAEKFGVGAKLCGIYANKKVRVKISPQLFPGATSLDGDIVKLDDNGEDATTLDVDEVEID</sequence>
<accession>Q8T0Z3</accession>
<accession>Q8T0Z4</accession>
<keyword id="KW-0044">Antibiotic</keyword>
<keyword id="KW-0929">Antimicrobial</keyword>
<keyword id="KW-0204">Cytolysis</keyword>
<keyword id="KW-0903">Direct protein sequencing</keyword>
<keyword id="KW-0354">Hemolysis</keyword>
<keyword id="KW-0406">Ion transport</keyword>
<keyword id="KW-0472">Membrane</keyword>
<keyword id="KW-0964">Secreted</keyword>
<keyword id="KW-0732">Signal</keyword>
<keyword id="KW-1052">Target cell membrane</keyword>
<keyword id="KW-1053">Target membrane</keyword>
<keyword id="KW-0812">Transmembrane</keyword>
<keyword id="KW-0813">Transport</keyword>